<evidence type="ECO:0000255" key="1">
    <source>
        <dbReference type="HAMAP-Rule" id="MF_01043"/>
    </source>
</evidence>
<reference key="1">
    <citation type="journal article" date="2004" name="Proc. Natl. Acad. Sci. U.S.A.">
        <title>Genome sequence of the deep-sea gamma-proteobacterium Idiomarina loihiensis reveals amino acid fermentation as a source of carbon and energy.</title>
        <authorList>
            <person name="Hou S."/>
            <person name="Saw J.H."/>
            <person name="Lee K.S."/>
            <person name="Freitas T.A."/>
            <person name="Belisle C."/>
            <person name="Kawarabayasi Y."/>
            <person name="Donachie S.P."/>
            <person name="Pikina A."/>
            <person name="Galperin M.Y."/>
            <person name="Koonin E.V."/>
            <person name="Makarova K.S."/>
            <person name="Omelchenko M.V."/>
            <person name="Sorokin A."/>
            <person name="Wolf Y.I."/>
            <person name="Li Q.X."/>
            <person name="Keum Y.S."/>
            <person name="Campbell S."/>
            <person name="Denery J."/>
            <person name="Aizawa S."/>
            <person name="Shibata S."/>
            <person name="Malahoff A."/>
            <person name="Alam M."/>
        </authorList>
    </citation>
    <scope>NUCLEOTIDE SEQUENCE [LARGE SCALE GENOMIC DNA]</scope>
    <source>
        <strain>ATCC BAA-735 / DSM 15497 / L2-TR</strain>
    </source>
</reference>
<name>PLSY_IDILO</name>
<feature type="chain" id="PRO_0000188383" description="Glycerol-3-phosphate acyltransferase">
    <location>
        <begin position="1"/>
        <end position="196"/>
    </location>
</feature>
<feature type="transmembrane region" description="Helical" evidence="1">
    <location>
        <begin position="4"/>
        <end position="24"/>
    </location>
</feature>
<feature type="transmembrane region" description="Helical" evidence="1">
    <location>
        <begin position="80"/>
        <end position="100"/>
    </location>
</feature>
<feature type="transmembrane region" description="Helical" evidence="1">
    <location>
        <begin position="114"/>
        <end position="134"/>
    </location>
</feature>
<feature type="transmembrane region" description="Helical" evidence="1">
    <location>
        <begin position="155"/>
        <end position="175"/>
    </location>
</feature>
<accession>Q5QY47</accession>
<sequence length="196" mass="21672">MTALTLLMILSAYLLGSISSAVVICRLWGLPDPRKEGSGNPGATNVYRVGGKIPALLTLWFDVLKGMVPVWGSYFLGIEPFFLGLIAVAACLGHIFPLYFHFRGGKAVATALGAMFPVAWEMALLLIATWLLVFRVSRVSSLAALVTVCLAPFYAYWIKPQYTVPVIMISLLILWRHQANILRLSSGEEKAFKRRR</sequence>
<gene>
    <name evidence="1" type="primary">plsY</name>
    <name type="ordered locus">IL1969</name>
</gene>
<keyword id="KW-0997">Cell inner membrane</keyword>
<keyword id="KW-1003">Cell membrane</keyword>
<keyword id="KW-0444">Lipid biosynthesis</keyword>
<keyword id="KW-0443">Lipid metabolism</keyword>
<keyword id="KW-0472">Membrane</keyword>
<keyword id="KW-0594">Phospholipid biosynthesis</keyword>
<keyword id="KW-1208">Phospholipid metabolism</keyword>
<keyword id="KW-1185">Reference proteome</keyword>
<keyword id="KW-0808">Transferase</keyword>
<keyword id="KW-0812">Transmembrane</keyword>
<keyword id="KW-1133">Transmembrane helix</keyword>
<organism>
    <name type="scientific">Idiomarina loihiensis (strain ATCC BAA-735 / DSM 15497 / L2-TR)</name>
    <dbReference type="NCBI Taxonomy" id="283942"/>
    <lineage>
        <taxon>Bacteria</taxon>
        <taxon>Pseudomonadati</taxon>
        <taxon>Pseudomonadota</taxon>
        <taxon>Gammaproteobacteria</taxon>
        <taxon>Alteromonadales</taxon>
        <taxon>Idiomarinaceae</taxon>
        <taxon>Idiomarina</taxon>
    </lineage>
</organism>
<comment type="function">
    <text evidence="1">Catalyzes the transfer of an acyl group from acyl-phosphate (acyl-PO(4)) to glycerol-3-phosphate (G3P) to form lysophosphatidic acid (LPA). This enzyme utilizes acyl-phosphate as fatty acyl donor, but not acyl-CoA or acyl-ACP.</text>
</comment>
<comment type="catalytic activity">
    <reaction evidence="1">
        <text>an acyl phosphate + sn-glycerol 3-phosphate = a 1-acyl-sn-glycero-3-phosphate + phosphate</text>
        <dbReference type="Rhea" id="RHEA:34075"/>
        <dbReference type="ChEBI" id="CHEBI:43474"/>
        <dbReference type="ChEBI" id="CHEBI:57597"/>
        <dbReference type="ChEBI" id="CHEBI:57970"/>
        <dbReference type="ChEBI" id="CHEBI:59918"/>
        <dbReference type="EC" id="2.3.1.275"/>
    </reaction>
</comment>
<comment type="pathway">
    <text evidence="1">Lipid metabolism; phospholipid metabolism.</text>
</comment>
<comment type="subunit">
    <text evidence="1">Probably interacts with PlsX.</text>
</comment>
<comment type="subcellular location">
    <subcellularLocation>
        <location evidence="1">Cell inner membrane</location>
        <topology evidence="1">Multi-pass membrane protein</topology>
    </subcellularLocation>
</comment>
<comment type="similarity">
    <text evidence="1">Belongs to the PlsY family.</text>
</comment>
<protein>
    <recommendedName>
        <fullName evidence="1">Glycerol-3-phosphate acyltransferase</fullName>
    </recommendedName>
    <alternativeName>
        <fullName evidence="1">Acyl-PO4 G3P acyltransferase</fullName>
    </alternativeName>
    <alternativeName>
        <fullName evidence="1">Acyl-phosphate--glycerol-3-phosphate acyltransferase</fullName>
    </alternativeName>
    <alternativeName>
        <fullName evidence="1">G3P acyltransferase</fullName>
        <shortName evidence="1">GPAT</shortName>
        <ecNumber evidence="1">2.3.1.275</ecNumber>
    </alternativeName>
    <alternativeName>
        <fullName evidence="1">Lysophosphatidic acid synthase</fullName>
        <shortName evidence="1">LPA synthase</shortName>
    </alternativeName>
</protein>
<dbReference type="EC" id="2.3.1.275" evidence="1"/>
<dbReference type="EMBL" id="AE017340">
    <property type="protein sequence ID" value="AAV82801.1"/>
    <property type="molecule type" value="Genomic_DNA"/>
</dbReference>
<dbReference type="RefSeq" id="WP_011235197.1">
    <property type="nucleotide sequence ID" value="NC_006512.1"/>
</dbReference>
<dbReference type="SMR" id="Q5QY47"/>
<dbReference type="STRING" id="283942.IL1969"/>
<dbReference type="GeneID" id="41337159"/>
<dbReference type="KEGG" id="ilo:IL1969"/>
<dbReference type="eggNOG" id="COG0344">
    <property type="taxonomic scope" value="Bacteria"/>
</dbReference>
<dbReference type="HOGENOM" id="CLU_081254_0_2_6"/>
<dbReference type="OrthoDB" id="9777124at2"/>
<dbReference type="UniPathway" id="UPA00085"/>
<dbReference type="Proteomes" id="UP000001171">
    <property type="component" value="Chromosome"/>
</dbReference>
<dbReference type="GO" id="GO:0005886">
    <property type="term" value="C:plasma membrane"/>
    <property type="evidence" value="ECO:0007669"/>
    <property type="project" value="UniProtKB-SubCell"/>
</dbReference>
<dbReference type="GO" id="GO:0043772">
    <property type="term" value="F:acyl-phosphate glycerol-3-phosphate acyltransferase activity"/>
    <property type="evidence" value="ECO:0007669"/>
    <property type="project" value="UniProtKB-UniRule"/>
</dbReference>
<dbReference type="GO" id="GO:0008654">
    <property type="term" value="P:phospholipid biosynthetic process"/>
    <property type="evidence" value="ECO:0007669"/>
    <property type="project" value="UniProtKB-UniRule"/>
</dbReference>
<dbReference type="HAMAP" id="MF_01043">
    <property type="entry name" value="PlsY"/>
    <property type="match status" value="1"/>
</dbReference>
<dbReference type="InterPro" id="IPR003811">
    <property type="entry name" value="G3P_acylTferase_PlsY"/>
</dbReference>
<dbReference type="NCBIfam" id="TIGR00023">
    <property type="entry name" value="glycerol-3-phosphate 1-O-acyltransferase PlsY"/>
    <property type="match status" value="1"/>
</dbReference>
<dbReference type="PANTHER" id="PTHR30309:SF0">
    <property type="entry name" value="GLYCEROL-3-PHOSPHATE ACYLTRANSFERASE-RELATED"/>
    <property type="match status" value="1"/>
</dbReference>
<dbReference type="PANTHER" id="PTHR30309">
    <property type="entry name" value="INNER MEMBRANE PROTEIN YGIH"/>
    <property type="match status" value="1"/>
</dbReference>
<dbReference type="Pfam" id="PF02660">
    <property type="entry name" value="G3P_acyltransf"/>
    <property type="match status" value="1"/>
</dbReference>
<dbReference type="SMART" id="SM01207">
    <property type="entry name" value="G3P_acyltransf"/>
    <property type="match status" value="1"/>
</dbReference>
<proteinExistence type="inferred from homology"/>